<gene>
    <name type="ORF">ORF124</name>
</gene>
<dbReference type="EC" id="3.2.1.14"/>
<dbReference type="EMBL" id="U75930">
    <property type="protein sequence ID" value="AAC59123.1"/>
    <property type="molecule type" value="Genomic_DNA"/>
</dbReference>
<dbReference type="RefSeq" id="NP_046280.1">
    <property type="nucleotide sequence ID" value="NC_001875.2"/>
</dbReference>
<dbReference type="SMR" id="O10363"/>
<dbReference type="CAZy" id="GH18">
    <property type="family name" value="Glycoside Hydrolase Family 18"/>
</dbReference>
<dbReference type="KEGG" id="vg:912030"/>
<dbReference type="OrthoDB" id="2555at10239"/>
<dbReference type="Proteomes" id="UP000009248">
    <property type="component" value="Genome"/>
</dbReference>
<dbReference type="GO" id="GO:0044166">
    <property type="term" value="C:host cell endoplasmic reticulum lumen"/>
    <property type="evidence" value="ECO:0007669"/>
    <property type="project" value="UniProtKB-SubCell"/>
</dbReference>
<dbReference type="GO" id="GO:0008061">
    <property type="term" value="F:chitin binding"/>
    <property type="evidence" value="ECO:0007669"/>
    <property type="project" value="InterPro"/>
</dbReference>
<dbReference type="GO" id="GO:0008843">
    <property type="term" value="F:endochitinase activity"/>
    <property type="evidence" value="ECO:0007669"/>
    <property type="project" value="UniProtKB-EC"/>
</dbReference>
<dbReference type="GO" id="GO:0006032">
    <property type="term" value="P:chitin catabolic process"/>
    <property type="evidence" value="ECO:0007669"/>
    <property type="project" value="UniProtKB-KW"/>
</dbReference>
<dbReference type="GO" id="GO:0000272">
    <property type="term" value="P:polysaccharide catabolic process"/>
    <property type="evidence" value="ECO:0007669"/>
    <property type="project" value="UniProtKB-KW"/>
</dbReference>
<dbReference type="CDD" id="cd02848">
    <property type="entry name" value="E_set_Chitinase_N"/>
    <property type="match status" value="1"/>
</dbReference>
<dbReference type="CDD" id="cd06548">
    <property type="entry name" value="GH18_chitinase"/>
    <property type="match status" value="1"/>
</dbReference>
<dbReference type="Gene3D" id="3.10.50.10">
    <property type="match status" value="1"/>
</dbReference>
<dbReference type="Gene3D" id="3.20.20.80">
    <property type="entry name" value="Glycosidases"/>
    <property type="match status" value="1"/>
</dbReference>
<dbReference type="Gene3D" id="2.60.40.10">
    <property type="entry name" value="Immunoglobulins"/>
    <property type="match status" value="1"/>
</dbReference>
<dbReference type="InterPro" id="IPR011583">
    <property type="entry name" value="Chitinase_II/V-like_cat"/>
</dbReference>
<dbReference type="InterPro" id="IPR029070">
    <property type="entry name" value="Chitinase_insertion_sf"/>
</dbReference>
<dbReference type="InterPro" id="IPR013540">
    <property type="entry name" value="ChitinaseA_N"/>
</dbReference>
<dbReference type="InterPro" id="IPR001223">
    <property type="entry name" value="Glyco_hydro18_cat"/>
</dbReference>
<dbReference type="InterPro" id="IPR001579">
    <property type="entry name" value="Glyco_hydro_18_chit_AS"/>
</dbReference>
<dbReference type="InterPro" id="IPR017853">
    <property type="entry name" value="Glycoside_hydrolase_SF"/>
</dbReference>
<dbReference type="InterPro" id="IPR050314">
    <property type="entry name" value="Glycosyl_Hydrlase_18"/>
</dbReference>
<dbReference type="InterPro" id="IPR013783">
    <property type="entry name" value="Ig-like_fold"/>
</dbReference>
<dbReference type="InterPro" id="IPR014756">
    <property type="entry name" value="Ig_E-set"/>
</dbReference>
<dbReference type="InterPro" id="IPR022409">
    <property type="entry name" value="PKD/Chitinase_dom"/>
</dbReference>
<dbReference type="PANTHER" id="PTHR11177">
    <property type="entry name" value="CHITINASE"/>
    <property type="match status" value="1"/>
</dbReference>
<dbReference type="PANTHER" id="PTHR11177:SF317">
    <property type="entry name" value="CHITINASE 12-RELATED"/>
    <property type="match status" value="1"/>
</dbReference>
<dbReference type="Pfam" id="PF08329">
    <property type="entry name" value="ChitinaseA_N"/>
    <property type="match status" value="1"/>
</dbReference>
<dbReference type="Pfam" id="PF00704">
    <property type="entry name" value="Glyco_hydro_18"/>
    <property type="match status" value="1"/>
</dbReference>
<dbReference type="SMART" id="SM00636">
    <property type="entry name" value="Glyco_18"/>
    <property type="match status" value="1"/>
</dbReference>
<dbReference type="SMART" id="SM00089">
    <property type="entry name" value="PKD"/>
    <property type="match status" value="1"/>
</dbReference>
<dbReference type="SUPFAM" id="SSF51445">
    <property type="entry name" value="(Trans)glycosidases"/>
    <property type="match status" value="1"/>
</dbReference>
<dbReference type="SUPFAM" id="SSF54556">
    <property type="entry name" value="Chitinase insertion domain"/>
    <property type="match status" value="1"/>
</dbReference>
<dbReference type="SUPFAM" id="SSF81296">
    <property type="entry name" value="E set domains"/>
    <property type="match status" value="1"/>
</dbReference>
<dbReference type="PROSITE" id="PS00014">
    <property type="entry name" value="ER_TARGET"/>
    <property type="match status" value="1"/>
</dbReference>
<dbReference type="PROSITE" id="PS01095">
    <property type="entry name" value="GH18_1"/>
    <property type="match status" value="1"/>
</dbReference>
<dbReference type="PROSITE" id="PS51910">
    <property type="entry name" value="GH18_2"/>
    <property type="match status" value="1"/>
</dbReference>
<comment type="catalytic activity">
    <reaction>
        <text>Random endo-hydrolysis of N-acetyl-beta-D-glucosaminide (1-&gt;4)-beta-linkages in chitin and chitodextrins.</text>
        <dbReference type="EC" id="3.2.1.14"/>
    </reaction>
</comment>
<comment type="subcellular location">
    <subcellularLocation>
        <location evidence="4">Host endoplasmic reticulum lumen</location>
    </subcellularLocation>
</comment>
<comment type="similarity">
    <text evidence="4">Belongs to the glycosyl hydrolase 18 family. Chitinase class II subfamily.</text>
</comment>
<proteinExistence type="inferred from homology"/>
<name>CHIT_NPVOP</name>
<organismHost>
    <name type="scientific">Orgyia pseudotsugata</name>
    <name type="common">Douglas-fir tussock moth</name>
    <dbReference type="NCBI Taxonomy" id="33414"/>
</organismHost>
<organism>
    <name type="scientific">Orgyia pseudotsugata multicapsid polyhedrosis virus</name>
    <name type="common">OpMNPV</name>
    <dbReference type="NCBI Taxonomy" id="262177"/>
    <lineage>
        <taxon>Viruses</taxon>
        <taxon>Viruses incertae sedis</taxon>
        <taxon>Naldaviricetes</taxon>
        <taxon>Lefavirales</taxon>
        <taxon>Baculoviridae</taxon>
        <taxon>Alphabaculovirus</taxon>
        <taxon>Alphabaculovirus orpseudotsugatae</taxon>
    </lineage>
</organism>
<keyword id="KW-0119">Carbohydrate metabolism</keyword>
<keyword id="KW-0146">Chitin degradation</keyword>
<keyword id="KW-0325">Glycoprotein</keyword>
<keyword id="KW-0326">Glycosidase</keyword>
<keyword id="KW-1038">Host endoplasmic reticulum</keyword>
<keyword id="KW-0378">Hydrolase</keyword>
<keyword id="KW-0624">Polysaccharide degradation</keyword>
<keyword id="KW-1185">Reference proteome</keyword>
<keyword id="KW-0732">Signal</keyword>
<evidence type="ECO:0000255" key="1"/>
<evidence type="ECO:0000255" key="2">
    <source>
        <dbReference type="PROSITE-ProRule" id="PRU01258"/>
    </source>
</evidence>
<evidence type="ECO:0000255" key="3">
    <source>
        <dbReference type="PROSITE-ProRule" id="PRU10138"/>
    </source>
</evidence>
<evidence type="ECO:0000305" key="4"/>
<sequence>MLHYLATILWLAVAHASPGTPVIDWADRNYALVSVNSEATAYENLVERKAGVSVPVSWNVWNGGVGDMAYVLFNENQVWKGAAAAKRATIDVSKSGQFNMRVKLCDDDGFSVSEPVTVRVADTDGGHLSPLEYAWGENNKPGRPHNKTVAAYFVEWGVYGRGFPVDKVPLPNLSHLLYGFIPICGGDGLNDALKTIPGSFEALQRSCKGRADFKVAIHDPWAAIQKPQKGVSAWNEPYKGNFGQLMAAKLANPHLKILPSIGGWTLSDPFYFMHDADKRRVFVESVKEFLQVWKFFDGVDIDWEFPGGKGANPALGNGERDADTYLVLLKELRAMLDELQLQTNKTYELTSAISSGYDKIAVVKYDAAQRFLDKIFLMSYDFKGAWSNTDLGYQTTLYAPSWNANELYTTDHAVKLLTGQGVAAHKLIVGVAMYGRGWTGVSGYAGDKYFSGTADGPVPGTWENGVVDYRQINNELSKYIYRFDAAAKAAYVFNKERGDLISFDSVDSVLAKNVYVQQNGLGGLFAWEIDADNGDLLNAMNERVRVKDEL</sequence>
<feature type="signal peptide" evidence="1">
    <location>
        <begin position="1"/>
        <end position="16"/>
    </location>
</feature>
<feature type="chain" id="PRO_0000011951" description="Probable endochitinase">
    <location>
        <begin position="17"/>
        <end position="550"/>
    </location>
</feature>
<feature type="domain" description="GH18" evidence="2">
    <location>
        <begin position="147"/>
        <end position="547"/>
    </location>
</feature>
<feature type="short sequence motif" description="Prevents secretion from ER" evidence="3">
    <location>
        <begin position="547"/>
        <end position="550"/>
    </location>
</feature>
<feature type="active site" description="Proton donor" evidence="2">
    <location>
        <position position="304"/>
    </location>
</feature>
<feature type="glycosylation site" description="N-linked (GlcNAc...) asparagine; by host" evidence="1">
    <location>
        <position position="146"/>
    </location>
</feature>
<feature type="glycosylation site" description="N-linked (GlcNAc...) asparagine; by host" evidence="1">
    <location>
        <position position="172"/>
    </location>
</feature>
<feature type="glycosylation site" description="N-linked (GlcNAc...) asparagine; by host" evidence="1">
    <location>
        <position position="344"/>
    </location>
</feature>
<reference key="1">
    <citation type="journal article" date="1997" name="Virology">
        <title>The sequence of the Orgyia pseudotsugata multinucleocapsid nuclear polyhedrosis virus genome.</title>
        <authorList>
            <person name="Ahrens C.H."/>
            <person name="Russell R.R."/>
            <person name="Funk C.J."/>
            <person name="Evans J."/>
            <person name="Harwood S."/>
            <person name="Rohrmann G.F."/>
        </authorList>
    </citation>
    <scope>NUCLEOTIDE SEQUENCE [LARGE SCALE GENOMIC DNA]</scope>
</reference>
<protein>
    <recommendedName>
        <fullName>Probable endochitinase</fullName>
        <ecNumber>3.2.1.14</ecNumber>
    </recommendedName>
</protein>
<accession>O10363</accession>